<proteinExistence type="inferred from homology"/>
<sequence length="342" mass="37186">MTDNPLLSSASQIEDQDAALRPKTLAEFVGQAGAKDNLQVFIESAKQRREAMDHVLFFGPPGLGKTTLAQIIARELGVNFRATSGPVIAKAGDLAALLTNLEHGDVLFIDEIHRLNPVVEEVLYPAMEDRALDLIIGEGPSARSVRIDLPPFTLIGATTRQGLLQTPLRDRFGIPVRLQFYSVEELERVVARGASLMGIGIDKGGATEIARRSRGTPRVAGRLLRRVRDFAQVAGAEKITQSIADNALTRLEVDKIGLDLQDRRYLTMIADIYKGGPVGVETLAAGLSEPRDTIEEVIEPYLIQLGMIARTARGRCLNDRGWQHLGLAPPSGQMPGLFGPDE</sequence>
<gene>
    <name evidence="1" type="primary">ruvB</name>
    <name type="ordered locus">Saro_0423</name>
</gene>
<reference key="1">
    <citation type="submission" date="2006-01" db="EMBL/GenBank/DDBJ databases">
        <title>Complete sequence of Novosphingobium aromaticivorans DSM 12444.</title>
        <authorList>
            <consortium name="US DOE Joint Genome Institute"/>
            <person name="Copeland A."/>
            <person name="Lucas S."/>
            <person name="Lapidus A."/>
            <person name="Barry K."/>
            <person name="Detter J.C."/>
            <person name="Glavina T."/>
            <person name="Hammon N."/>
            <person name="Israni S."/>
            <person name="Pitluck S."/>
            <person name="Chain P."/>
            <person name="Malfatti S."/>
            <person name="Shin M."/>
            <person name="Vergez L."/>
            <person name="Schmutz J."/>
            <person name="Larimer F."/>
            <person name="Land M."/>
            <person name="Kyrpides N."/>
            <person name="Ivanova N."/>
            <person name="Fredrickson J."/>
            <person name="Balkwill D."/>
            <person name="Romine M.F."/>
            <person name="Richardson P."/>
        </authorList>
    </citation>
    <scope>NUCLEOTIDE SEQUENCE [LARGE SCALE GENOMIC DNA]</scope>
    <source>
        <strain>ATCC 700278 / DSM 12444 / CCUG 56034 / CIP 105152 / NBRC 16084 / F199</strain>
    </source>
</reference>
<organism>
    <name type="scientific">Novosphingobium aromaticivorans (strain ATCC 700278 / DSM 12444 / CCUG 56034 / CIP 105152 / NBRC 16084 / F199)</name>
    <dbReference type="NCBI Taxonomy" id="279238"/>
    <lineage>
        <taxon>Bacteria</taxon>
        <taxon>Pseudomonadati</taxon>
        <taxon>Pseudomonadota</taxon>
        <taxon>Alphaproteobacteria</taxon>
        <taxon>Sphingomonadales</taxon>
        <taxon>Sphingomonadaceae</taxon>
        <taxon>Novosphingobium</taxon>
    </lineage>
</organism>
<protein>
    <recommendedName>
        <fullName evidence="1">Holliday junction branch migration complex subunit RuvB</fullName>
        <ecNumber evidence="1">3.6.4.-</ecNumber>
    </recommendedName>
</protein>
<keyword id="KW-0067">ATP-binding</keyword>
<keyword id="KW-0963">Cytoplasm</keyword>
<keyword id="KW-0227">DNA damage</keyword>
<keyword id="KW-0233">DNA recombination</keyword>
<keyword id="KW-0234">DNA repair</keyword>
<keyword id="KW-0238">DNA-binding</keyword>
<keyword id="KW-0378">Hydrolase</keyword>
<keyword id="KW-0547">Nucleotide-binding</keyword>
<keyword id="KW-1185">Reference proteome</keyword>
<comment type="function">
    <text evidence="1">The RuvA-RuvB-RuvC complex processes Holliday junction (HJ) DNA during genetic recombination and DNA repair, while the RuvA-RuvB complex plays an important role in the rescue of blocked DNA replication forks via replication fork reversal (RFR). RuvA specifically binds to HJ cruciform DNA, conferring on it an open structure. The RuvB hexamer acts as an ATP-dependent pump, pulling dsDNA into and through the RuvAB complex. RuvB forms 2 homohexamers on either side of HJ DNA bound by 1 or 2 RuvA tetramers; 4 subunits per hexamer contact DNA at a time. Coordinated motions by a converter formed by DNA-disengaged RuvB subunits stimulates ATP hydrolysis and nucleotide exchange. Immobilization of the converter enables RuvB to convert the ATP-contained energy into a lever motion, pulling 2 nucleotides of DNA out of the RuvA tetramer per ATP hydrolyzed, thus driving DNA branch migration. The RuvB motors rotate together with the DNA substrate, which together with the progressing nucleotide cycle form the mechanistic basis for DNA recombination by continuous HJ branch migration. Branch migration allows RuvC to scan DNA until it finds its consensus sequence, where it cleaves and resolves cruciform DNA.</text>
</comment>
<comment type="catalytic activity">
    <reaction evidence="1">
        <text>ATP + H2O = ADP + phosphate + H(+)</text>
        <dbReference type="Rhea" id="RHEA:13065"/>
        <dbReference type="ChEBI" id="CHEBI:15377"/>
        <dbReference type="ChEBI" id="CHEBI:15378"/>
        <dbReference type="ChEBI" id="CHEBI:30616"/>
        <dbReference type="ChEBI" id="CHEBI:43474"/>
        <dbReference type="ChEBI" id="CHEBI:456216"/>
    </reaction>
</comment>
<comment type="subunit">
    <text evidence="1">Homohexamer. Forms an RuvA(8)-RuvB(12)-Holliday junction (HJ) complex. HJ DNA is sandwiched between 2 RuvA tetramers; dsDNA enters through RuvA and exits via RuvB. An RuvB hexamer assembles on each DNA strand where it exits the tetramer. Each RuvB hexamer is contacted by two RuvA subunits (via domain III) on 2 adjacent RuvB subunits; this complex drives branch migration. In the full resolvosome a probable DNA-RuvA(4)-RuvB(12)-RuvC(2) complex forms which resolves the HJ.</text>
</comment>
<comment type="subcellular location">
    <subcellularLocation>
        <location evidence="1">Cytoplasm</location>
    </subcellularLocation>
</comment>
<comment type="domain">
    <text evidence="1">Has 3 domains, the large (RuvB-L) and small ATPase (RuvB-S) domains and the C-terminal head (RuvB-H) domain. The head domain binds DNA, while the ATPase domains jointly bind ATP, ADP or are empty depending on the state of the subunit in the translocation cycle. During a single DNA translocation step the structure of each domain remains the same, but their relative positions change.</text>
</comment>
<comment type="similarity">
    <text evidence="1">Belongs to the RuvB family.</text>
</comment>
<dbReference type="EC" id="3.6.4.-" evidence="1"/>
<dbReference type="EMBL" id="CP000248">
    <property type="protein sequence ID" value="ABD24871.1"/>
    <property type="molecule type" value="Genomic_DNA"/>
</dbReference>
<dbReference type="RefSeq" id="WP_011444085.1">
    <property type="nucleotide sequence ID" value="NC_007794.1"/>
</dbReference>
<dbReference type="SMR" id="Q2GBA2"/>
<dbReference type="STRING" id="279238.Saro_0423"/>
<dbReference type="KEGG" id="nar:Saro_0423"/>
<dbReference type="eggNOG" id="COG2255">
    <property type="taxonomic scope" value="Bacteria"/>
</dbReference>
<dbReference type="HOGENOM" id="CLU_055599_1_0_5"/>
<dbReference type="Proteomes" id="UP000009134">
    <property type="component" value="Chromosome"/>
</dbReference>
<dbReference type="GO" id="GO:0005737">
    <property type="term" value="C:cytoplasm"/>
    <property type="evidence" value="ECO:0007669"/>
    <property type="project" value="UniProtKB-SubCell"/>
</dbReference>
<dbReference type="GO" id="GO:0048476">
    <property type="term" value="C:Holliday junction resolvase complex"/>
    <property type="evidence" value="ECO:0007669"/>
    <property type="project" value="UniProtKB-UniRule"/>
</dbReference>
<dbReference type="GO" id="GO:0005524">
    <property type="term" value="F:ATP binding"/>
    <property type="evidence" value="ECO:0007669"/>
    <property type="project" value="UniProtKB-UniRule"/>
</dbReference>
<dbReference type="GO" id="GO:0016887">
    <property type="term" value="F:ATP hydrolysis activity"/>
    <property type="evidence" value="ECO:0007669"/>
    <property type="project" value="InterPro"/>
</dbReference>
<dbReference type="GO" id="GO:0000400">
    <property type="term" value="F:four-way junction DNA binding"/>
    <property type="evidence" value="ECO:0007669"/>
    <property type="project" value="UniProtKB-UniRule"/>
</dbReference>
<dbReference type="GO" id="GO:0009378">
    <property type="term" value="F:four-way junction helicase activity"/>
    <property type="evidence" value="ECO:0007669"/>
    <property type="project" value="InterPro"/>
</dbReference>
<dbReference type="GO" id="GO:0006310">
    <property type="term" value="P:DNA recombination"/>
    <property type="evidence" value="ECO:0007669"/>
    <property type="project" value="UniProtKB-UniRule"/>
</dbReference>
<dbReference type="GO" id="GO:0006281">
    <property type="term" value="P:DNA repair"/>
    <property type="evidence" value="ECO:0007669"/>
    <property type="project" value="UniProtKB-UniRule"/>
</dbReference>
<dbReference type="CDD" id="cd00009">
    <property type="entry name" value="AAA"/>
    <property type="match status" value="1"/>
</dbReference>
<dbReference type="Gene3D" id="1.10.8.60">
    <property type="match status" value="1"/>
</dbReference>
<dbReference type="Gene3D" id="3.40.50.300">
    <property type="entry name" value="P-loop containing nucleotide triphosphate hydrolases"/>
    <property type="match status" value="1"/>
</dbReference>
<dbReference type="Gene3D" id="1.10.10.10">
    <property type="entry name" value="Winged helix-like DNA-binding domain superfamily/Winged helix DNA-binding domain"/>
    <property type="match status" value="1"/>
</dbReference>
<dbReference type="HAMAP" id="MF_00016">
    <property type="entry name" value="DNA_HJ_migration_RuvB"/>
    <property type="match status" value="1"/>
</dbReference>
<dbReference type="InterPro" id="IPR003593">
    <property type="entry name" value="AAA+_ATPase"/>
</dbReference>
<dbReference type="InterPro" id="IPR041445">
    <property type="entry name" value="AAA_lid_4"/>
</dbReference>
<dbReference type="InterPro" id="IPR004605">
    <property type="entry name" value="DNA_helicase_Holl-junc_RuvB"/>
</dbReference>
<dbReference type="InterPro" id="IPR027417">
    <property type="entry name" value="P-loop_NTPase"/>
</dbReference>
<dbReference type="InterPro" id="IPR008824">
    <property type="entry name" value="RuvB-like_N"/>
</dbReference>
<dbReference type="InterPro" id="IPR008823">
    <property type="entry name" value="RuvB_C"/>
</dbReference>
<dbReference type="InterPro" id="IPR036388">
    <property type="entry name" value="WH-like_DNA-bd_sf"/>
</dbReference>
<dbReference type="InterPro" id="IPR036390">
    <property type="entry name" value="WH_DNA-bd_sf"/>
</dbReference>
<dbReference type="NCBIfam" id="NF000868">
    <property type="entry name" value="PRK00080.1"/>
    <property type="match status" value="1"/>
</dbReference>
<dbReference type="NCBIfam" id="TIGR00635">
    <property type="entry name" value="ruvB"/>
    <property type="match status" value="1"/>
</dbReference>
<dbReference type="PANTHER" id="PTHR42848">
    <property type="match status" value="1"/>
</dbReference>
<dbReference type="PANTHER" id="PTHR42848:SF1">
    <property type="entry name" value="HOLLIDAY JUNCTION BRANCH MIGRATION COMPLEX SUBUNIT RUVB"/>
    <property type="match status" value="1"/>
</dbReference>
<dbReference type="Pfam" id="PF17864">
    <property type="entry name" value="AAA_lid_4"/>
    <property type="match status" value="1"/>
</dbReference>
<dbReference type="Pfam" id="PF05491">
    <property type="entry name" value="RuvB_C"/>
    <property type="match status" value="1"/>
</dbReference>
<dbReference type="Pfam" id="PF05496">
    <property type="entry name" value="RuvB_N"/>
    <property type="match status" value="1"/>
</dbReference>
<dbReference type="SMART" id="SM00382">
    <property type="entry name" value="AAA"/>
    <property type="match status" value="1"/>
</dbReference>
<dbReference type="SUPFAM" id="SSF52540">
    <property type="entry name" value="P-loop containing nucleoside triphosphate hydrolases"/>
    <property type="match status" value="1"/>
</dbReference>
<dbReference type="SUPFAM" id="SSF46785">
    <property type="entry name" value="Winged helix' DNA-binding domain"/>
    <property type="match status" value="1"/>
</dbReference>
<name>RUVB_NOVAD</name>
<evidence type="ECO:0000255" key="1">
    <source>
        <dbReference type="HAMAP-Rule" id="MF_00016"/>
    </source>
</evidence>
<accession>Q2GBA2</accession>
<feature type="chain" id="PRO_0000235385" description="Holliday junction branch migration complex subunit RuvB">
    <location>
        <begin position="1"/>
        <end position="342"/>
    </location>
</feature>
<feature type="region of interest" description="Large ATPase domain (RuvB-L)" evidence="1">
    <location>
        <begin position="2"/>
        <end position="181"/>
    </location>
</feature>
<feature type="region of interest" description="Small ATPAse domain (RuvB-S)" evidence="1">
    <location>
        <begin position="182"/>
        <end position="252"/>
    </location>
</feature>
<feature type="region of interest" description="Head domain (RuvB-H)" evidence="1">
    <location>
        <begin position="255"/>
        <end position="342"/>
    </location>
</feature>
<feature type="binding site" evidence="1">
    <location>
        <position position="20"/>
    </location>
    <ligand>
        <name>ATP</name>
        <dbReference type="ChEBI" id="CHEBI:30616"/>
    </ligand>
</feature>
<feature type="binding site" evidence="1">
    <location>
        <position position="21"/>
    </location>
    <ligand>
        <name>ATP</name>
        <dbReference type="ChEBI" id="CHEBI:30616"/>
    </ligand>
</feature>
<feature type="binding site" evidence="1">
    <location>
        <position position="62"/>
    </location>
    <ligand>
        <name>ATP</name>
        <dbReference type="ChEBI" id="CHEBI:30616"/>
    </ligand>
</feature>
<feature type="binding site" evidence="1">
    <location>
        <position position="65"/>
    </location>
    <ligand>
        <name>ATP</name>
        <dbReference type="ChEBI" id="CHEBI:30616"/>
    </ligand>
</feature>
<feature type="binding site" evidence="1">
    <location>
        <position position="66"/>
    </location>
    <ligand>
        <name>ATP</name>
        <dbReference type="ChEBI" id="CHEBI:30616"/>
    </ligand>
</feature>
<feature type="binding site" evidence="1">
    <location>
        <position position="66"/>
    </location>
    <ligand>
        <name>Mg(2+)</name>
        <dbReference type="ChEBI" id="CHEBI:18420"/>
    </ligand>
</feature>
<feature type="binding site" evidence="1">
    <location>
        <position position="67"/>
    </location>
    <ligand>
        <name>ATP</name>
        <dbReference type="ChEBI" id="CHEBI:30616"/>
    </ligand>
</feature>
<feature type="binding site" evidence="1">
    <location>
        <position position="171"/>
    </location>
    <ligand>
        <name>ATP</name>
        <dbReference type="ChEBI" id="CHEBI:30616"/>
    </ligand>
</feature>
<feature type="binding site" evidence="1">
    <location>
        <position position="181"/>
    </location>
    <ligand>
        <name>ATP</name>
        <dbReference type="ChEBI" id="CHEBI:30616"/>
    </ligand>
</feature>
<feature type="binding site" evidence="1">
    <location>
        <position position="218"/>
    </location>
    <ligand>
        <name>ATP</name>
        <dbReference type="ChEBI" id="CHEBI:30616"/>
    </ligand>
</feature>
<feature type="binding site" evidence="1">
    <location>
        <position position="291"/>
    </location>
    <ligand>
        <name>DNA</name>
        <dbReference type="ChEBI" id="CHEBI:16991"/>
    </ligand>
</feature>
<feature type="binding site" evidence="1">
    <location>
        <position position="310"/>
    </location>
    <ligand>
        <name>DNA</name>
        <dbReference type="ChEBI" id="CHEBI:16991"/>
    </ligand>
</feature>
<feature type="binding site" evidence="1">
    <location>
        <position position="315"/>
    </location>
    <ligand>
        <name>DNA</name>
        <dbReference type="ChEBI" id="CHEBI:16991"/>
    </ligand>
</feature>